<name>TLP_CLOB1</name>
<reference key="1">
    <citation type="journal article" date="2007" name="PLoS ONE">
        <title>Analysis of the neurotoxin complex genes in Clostridium botulinum A1-A4 and B1 strains: BoNT/A3, /Ba4 and /B1 clusters are located within plasmids.</title>
        <authorList>
            <person name="Smith T.J."/>
            <person name="Hill K.K."/>
            <person name="Foley B.T."/>
            <person name="Detter J.C."/>
            <person name="Munk A.C."/>
            <person name="Bruce D.C."/>
            <person name="Doggett N.A."/>
            <person name="Smith L.A."/>
            <person name="Marks J.D."/>
            <person name="Xie G."/>
            <person name="Brettin T.S."/>
        </authorList>
    </citation>
    <scope>NUCLEOTIDE SEQUENCE [LARGE SCALE GENOMIC DNA]</scope>
    <source>
        <strain>ATCC 19397 / Type A</strain>
    </source>
</reference>
<protein>
    <recommendedName>
        <fullName evidence="1">Protein Tlp homolog</fullName>
    </recommendedName>
</protein>
<comment type="similarity">
    <text evidence="1">Belongs to the Tlp family.</text>
</comment>
<sequence>MKNKPDDRRDNVDKIQYNITKTIQNCELADEMIAKTDDEKTKKTLIEKNERRREALDGMREEIKDEARDKKNGYM</sequence>
<organism>
    <name type="scientific">Clostridium botulinum (strain ATCC 19397 / Type A)</name>
    <dbReference type="NCBI Taxonomy" id="441770"/>
    <lineage>
        <taxon>Bacteria</taxon>
        <taxon>Bacillati</taxon>
        <taxon>Bacillota</taxon>
        <taxon>Clostridia</taxon>
        <taxon>Eubacteriales</taxon>
        <taxon>Clostridiaceae</taxon>
        <taxon>Clostridium</taxon>
    </lineage>
</organism>
<gene>
    <name evidence="1" type="primary">tlp</name>
    <name type="ordered locus">CLB_1074</name>
</gene>
<evidence type="ECO:0000255" key="1">
    <source>
        <dbReference type="HAMAP-Rule" id="MF_01506"/>
    </source>
</evidence>
<evidence type="ECO:0000256" key="2">
    <source>
        <dbReference type="SAM" id="MobiDB-lite"/>
    </source>
</evidence>
<feature type="chain" id="PRO_0000315207" description="Protein Tlp homolog">
    <location>
        <begin position="1"/>
        <end position="75"/>
    </location>
</feature>
<feature type="region of interest" description="Disordered" evidence="2">
    <location>
        <begin position="53"/>
        <end position="75"/>
    </location>
</feature>
<proteinExistence type="inferred from homology"/>
<dbReference type="EMBL" id="CP000726">
    <property type="protein sequence ID" value="ABS33157.1"/>
    <property type="molecule type" value="Genomic_DNA"/>
</dbReference>
<dbReference type="RefSeq" id="WP_011948709.1">
    <property type="nucleotide sequence ID" value="NC_009697.1"/>
</dbReference>
<dbReference type="SMR" id="A7FSS9"/>
<dbReference type="GeneID" id="5185289"/>
<dbReference type="KEGG" id="cba:CLB_1074"/>
<dbReference type="HOGENOM" id="CLU_178266_1_1_9"/>
<dbReference type="HAMAP" id="MF_01506">
    <property type="entry name" value="Tlp"/>
    <property type="match status" value="1"/>
</dbReference>
<dbReference type="InterPro" id="IPR017524">
    <property type="entry name" value="SASP_thioredoxin-like"/>
</dbReference>
<dbReference type="NCBIfam" id="TIGR03090">
    <property type="entry name" value="SASP_tlp"/>
    <property type="match status" value="1"/>
</dbReference>
<dbReference type="Pfam" id="PF19824">
    <property type="entry name" value="Tlp"/>
    <property type="match status" value="1"/>
</dbReference>
<accession>A7FSS9</accession>